<feature type="chain" id="PRO_0000392737" description="Dermonecrotic toxin LspaSicTox-alphaIA1iii">
    <location>
        <begin position="1" status="less than"/>
        <end position="273"/>
    </location>
</feature>
<feature type="active site" evidence="5">
    <location>
        <position position="5"/>
    </location>
</feature>
<feature type="active site" description="Nucleophile" evidence="5">
    <location>
        <position position="41"/>
    </location>
</feature>
<feature type="binding site" evidence="5">
    <location>
        <position position="25"/>
    </location>
    <ligand>
        <name>Mg(2+)</name>
        <dbReference type="ChEBI" id="CHEBI:18420"/>
    </ligand>
</feature>
<feature type="binding site" evidence="5">
    <location>
        <position position="27"/>
    </location>
    <ligand>
        <name>Mg(2+)</name>
        <dbReference type="ChEBI" id="CHEBI:18420"/>
    </ligand>
</feature>
<feature type="binding site" evidence="5">
    <location>
        <position position="85"/>
    </location>
    <ligand>
        <name>Mg(2+)</name>
        <dbReference type="ChEBI" id="CHEBI:18420"/>
    </ligand>
</feature>
<feature type="disulfide bond" evidence="3">
    <location>
        <begin position="45"/>
        <end position="51"/>
    </location>
</feature>
<feature type="disulfide bond" evidence="3">
    <location>
        <begin position="47"/>
        <end position="190"/>
    </location>
</feature>
<feature type="non-terminal residue">
    <location>
        <position position="1"/>
    </location>
</feature>
<reference key="1">
    <citation type="journal article" date="2009" name="Mol. Biol. Evol.">
        <title>Molecular evolution, functional variation, and proposed nomenclature of the gene family that includes sphingomyelinase D in sicariid spider venoms.</title>
        <authorList>
            <person name="Binford G.J."/>
            <person name="Bodner M.R."/>
            <person name="Cordes M.H."/>
            <person name="Baldwin K.L."/>
            <person name="Rynerson M.R."/>
            <person name="Burns S.N."/>
            <person name="Zobel-Thropp P.A."/>
        </authorList>
    </citation>
    <scope>NUCLEOTIDE SEQUENCE [MRNA]</scope>
    <scope>NOMENCLATURE</scope>
    <source>
        <tissue>Venom gland</tissue>
    </source>
</reference>
<evidence type="ECO:0000250" key="1">
    <source>
        <dbReference type="UniProtKB" id="A0A0D4WTV1"/>
    </source>
</evidence>
<evidence type="ECO:0000250" key="2">
    <source>
        <dbReference type="UniProtKB" id="A0A0D4WV12"/>
    </source>
</evidence>
<evidence type="ECO:0000250" key="3">
    <source>
        <dbReference type="UniProtKB" id="P0CE80"/>
    </source>
</evidence>
<evidence type="ECO:0000250" key="4">
    <source>
        <dbReference type="UniProtKB" id="Q4ZFU2"/>
    </source>
</evidence>
<evidence type="ECO:0000250" key="5">
    <source>
        <dbReference type="UniProtKB" id="Q8I914"/>
    </source>
</evidence>
<evidence type="ECO:0000303" key="6">
    <source>
    </source>
</evidence>
<evidence type="ECO:0000305" key="7"/>
<evidence type="ECO:0000305" key="8">
    <source>
    </source>
</evidence>
<dbReference type="EC" id="4.6.1.-" evidence="4"/>
<dbReference type="EMBL" id="FJ171377">
    <property type="protein sequence ID" value="ACN48873.1"/>
    <property type="molecule type" value="mRNA"/>
</dbReference>
<dbReference type="SMR" id="C0JAU2"/>
<dbReference type="GO" id="GO:0005576">
    <property type="term" value="C:extracellular region"/>
    <property type="evidence" value="ECO:0007669"/>
    <property type="project" value="UniProtKB-SubCell"/>
</dbReference>
<dbReference type="GO" id="GO:0016829">
    <property type="term" value="F:lyase activity"/>
    <property type="evidence" value="ECO:0007669"/>
    <property type="project" value="UniProtKB-KW"/>
</dbReference>
<dbReference type="GO" id="GO:0046872">
    <property type="term" value="F:metal ion binding"/>
    <property type="evidence" value="ECO:0007669"/>
    <property type="project" value="UniProtKB-KW"/>
</dbReference>
<dbReference type="GO" id="GO:0008081">
    <property type="term" value="F:phosphoric diester hydrolase activity"/>
    <property type="evidence" value="ECO:0007669"/>
    <property type="project" value="InterPro"/>
</dbReference>
<dbReference type="GO" id="GO:0090729">
    <property type="term" value="F:toxin activity"/>
    <property type="evidence" value="ECO:0007669"/>
    <property type="project" value="UniProtKB-KW"/>
</dbReference>
<dbReference type="GO" id="GO:0031640">
    <property type="term" value="P:killing of cells of another organism"/>
    <property type="evidence" value="ECO:0007669"/>
    <property type="project" value="UniProtKB-KW"/>
</dbReference>
<dbReference type="GO" id="GO:0016042">
    <property type="term" value="P:lipid catabolic process"/>
    <property type="evidence" value="ECO:0007669"/>
    <property type="project" value="UniProtKB-KW"/>
</dbReference>
<dbReference type="CDD" id="cd08576">
    <property type="entry name" value="GDPD_like_SMaseD_PLD"/>
    <property type="match status" value="1"/>
</dbReference>
<dbReference type="Gene3D" id="3.20.20.190">
    <property type="entry name" value="Phosphatidylinositol (PI) phosphodiesterase"/>
    <property type="match status" value="1"/>
</dbReference>
<dbReference type="InterPro" id="IPR017946">
    <property type="entry name" value="PLC-like_Pdiesterase_TIM-brl"/>
</dbReference>
<dbReference type="Pfam" id="PF13653">
    <property type="entry name" value="GDPD_2"/>
    <property type="match status" value="1"/>
</dbReference>
<dbReference type="SUPFAM" id="SSF51695">
    <property type="entry name" value="PLC-like phosphodiesterases"/>
    <property type="match status" value="1"/>
</dbReference>
<name>A1H3_LOXSP</name>
<proteinExistence type="evidence at transcript level"/>
<keyword id="KW-0204">Cytolysis</keyword>
<keyword id="KW-1061">Dermonecrotic toxin</keyword>
<keyword id="KW-1015">Disulfide bond</keyword>
<keyword id="KW-0354">Hemolysis</keyword>
<keyword id="KW-0442">Lipid degradation</keyword>
<keyword id="KW-0443">Lipid metabolism</keyword>
<keyword id="KW-0456">Lyase</keyword>
<keyword id="KW-0460">Magnesium</keyword>
<keyword id="KW-0479">Metal-binding</keyword>
<keyword id="KW-0964">Secreted</keyword>
<keyword id="KW-0800">Toxin</keyword>
<organism>
    <name type="scientific">Loxosceles spadicea</name>
    <name type="common">Recluse spider</name>
    <dbReference type="NCBI Taxonomy" id="571530"/>
    <lineage>
        <taxon>Eukaryota</taxon>
        <taxon>Metazoa</taxon>
        <taxon>Ecdysozoa</taxon>
        <taxon>Arthropoda</taxon>
        <taxon>Chelicerata</taxon>
        <taxon>Arachnida</taxon>
        <taxon>Araneae</taxon>
        <taxon>Araneomorphae</taxon>
        <taxon>Haplogynae</taxon>
        <taxon>Scytodoidea</taxon>
        <taxon>Sicariidae</taxon>
        <taxon>Loxosceles</taxon>
    </lineage>
</organism>
<comment type="function">
    <text evidence="1 3">Dermonecrotic toxins cleave the phosphodiester linkage between the phosphate and headgroup of certain phospholipids (sphingolipid and lysolipid substrates), forming an alcohol (often choline) and a cyclic phosphate (By similarity). This toxin acts on sphingomyelin (SM) (By similarity). It may also act on ceramide phosphoethanolamine (CPE), lysophosphatidylcholine (LPC) and lysophosphatidylethanolamine (LPE), but not on lysophosphatidylserine (LPS), and lysophosphatidylglycerol (LPG) (By similarity). It acts by transphosphatidylation, releasing exclusively cyclic phosphate products as second products (By similarity). Induces dermonecrosis, hemolysis, increased vascular permeability, edema, inflammatory response, and platelet aggregation (By similarity).</text>
</comment>
<comment type="catalytic activity">
    <reaction evidence="1">
        <text>an N-(acyl)-sphingosylphosphocholine = an N-(acyl)-sphingosyl-1,3-cyclic phosphate + choline</text>
        <dbReference type="Rhea" id="RHEA:60652"/>
        <dbReference type="ChEBI" id="CHEBI:15354"/>
        <dbReference type="ChEBI" id="CHEBI:64583"/>
        <dbReference type="ChEBI" id="CHEBI:143892"/>
    </reaction>
</comment>
<comment type="catalytic activity">
    <reaction evidence="1">
        <text>an N-(acyl)-sphingosylphosphoethanolamine = an N-(acyl)-sphingosyl-1,3-cyclic phosphate + ethanolamine</text>
        <dbReference type="Rhea" id="RHEA:60648"/>
        <dbReference type="ChEBI" id="CHEBI:57603"/>
        <dbReference type="ChEBI" id="CHEBI:143891"/>
        <dbReference type="ChEBI" id="CHEBI:143892"/>
    </reaction>
</comment>
<comment type="catalytic activity">
    <reaction evidence="1">
        <text>a 1-acyl-sn-glycero-3-phosphocholine = a 1-acyl-sn-glycero-2,3-cyclic phosphate + choline</text>
        <dbReference type="Rhea" id="RHEA:60700"/>
        <dbReference type="ChEBI" id="CHEBI:15354"/>
        <dbReference type="ChEBI" id="CHEBI:58168"/>
        <dbReference type="ChEBI" id="CHEBI:143947"/>
    </reaction>
</comment>
<comment type="catalytic activity">
    <reaction evidence="1">
        <text>a 1-acyl-sn-glycero-3-phosphoethanolamine = a 1-acyl-sn-glycero-2,3-cyclic phosphate + ethanolamine</text>
        <dbReference type="Rhea" id="RHEA:60704"/>
        <dbReference type="ChEBI" id="CHEBI:57603"/>
        <dbReference type="ChEBI" id="CHEBI:64381"/>
        <dbReference type="ChEBI" id="CHEBI:143947"/>
    </reaction>
</comment>
<comment type="cofactor">
    <cofactor evidence="5">
        <name>Mg(2+)</name>
        <dbReference type="ChEBI" id="CHEBI:18420"/>
    </cofactor>
    <text evidence="5">Binds 1 Mg(2+) ion per subunit.</text>
</comment>
<comment type="subcellular location">
    <subcellularLocation>
        <location evidence="8">Secreted</location>
    </subcellularLocation>
</comment>
<comment type="tissue specificity">
    <text evidence="8">Expressed by the venom gland.</text>
</comment>
<comment type="similarity">
    <text evidence="7">Belongs to the arthropod phospholipase D family. Class II subfamily.</text>
</comment>
<comment type="caution">
    <text evidence="1 2 4">The most common activity assay for dermonecrotic toxins detects enzymatic activity by monitoring choline release from substrate. Liberation of choline from sphingomyelin (SM) or lysophosphatidylcholine (LPC) is commonly assumed to result from substrate hydrolysis, giving either ceramide-1-phosphate (C1P) or lysophosphatidic acid (LPA), respectively, as a second product. However, two studies from Lajoie and colleagues (2013 and 2015) report the observation of exclusive formation of cyclic phosphate products as second products, resulting from intramolecular transphosphatidylation. Cyclic phosphates have vastly different biological properties from their monoester counterparts, and they may be relevant to the pathology of brown spider envenomation.</text>
</comment>
<protein>
    <recommendedName>
        <fullName evidence="6">Dermonecrotic toxin LspaSicTox-alphaIA1iii</fullName>
        <ecNumber evidence="4">4.6.1.-</ecNumber>
    </recommendedName>
    <alternativeName>
        <fullName>Phospholipase D</fullName>
        <shortName>PLD</shortName>
    </alternativeName>
    <alternativeName>
        <fullName>Sphingomyelin phosphodiesterase D</fullName>
        <shortName>SMD</shortName>
        <shortName>SMase D</shortName>
        <shortName>Sphingomyelinase D</shortName>
    </alternativeName>
</protein>
<accession>C0JAU2</accession>
<sequence>WIMGHIVNAIGQIDEFVNLGANSIETDVSFDSNANPEYTYHGIPCDCGRNCKKWENFNDFLKGLRSATTPGDSKYKEKLVLVVFDLKTGSLYDNQANDAGKKLAKNLLQRYWNNGNNGGRAYIVLSIPDLNHYPLIKGFTDTLKQEGHPELLDKLGYDFSGNDAIGDVANAYKKAGVSGHVWQSDDITNCLLRGLTRVREAVANRDSGKGYINKVYYWTVDKRASTRDALDAGVDGIMTNYPDVITDVLNEAAYKSKFRVATYDDNPWETFKK</sequence>